<proteinExistence type="evidence at protein level"/>
<organism>
    <name type="scientific">Schizosaccharomyces pombe (strain 972 / ATCC 24843)</name>
    <name type="common">Fission yeast</name>
    <dbReference type="NCBI Taxonomy" id="284812"/>
    <lineage>
        <taxon>Eukaryota</taxon>
        <taxon>Fungi</taxon>
        <taxon>Dikarya</taxon>
        <taxon>Ascomycota</taxon>
        <taxon>Taphrinomycotina</taxon>
        <taxon>Schizosaccharomycetes</taxon>
        <taxon>Schizosaccharomycetales</taxon>
        <taxon>Schizosaccharomycetaceae</taxon>
        <taxon>Schizosaccharomyces</taxon>
    </lineage>
</organism>
<sequence>MLRYSLQARSALRGVRFSSSHSAPKPGSTIPFYINKKPLPTLLYFGTFGVIFSIPFIVVKYHNRNL</sequence>
<reference key="1">
    <citation type="journal article" date="2002" name="Nature">
        <title>The genome sequence of Schizosaccharomyces pombe.</title>
        <authorList>
            <person name="Wood V."/>
            <person name="Gwilliam R."/>
            <person name="Rajandream M.A."/>
            <person name="Lyne M.H."/>
            <person name="Lyne R."/>
            <person name="Stewart A."/>
            <person name="Sgouros J.G."/>
            <person name="Peat N."/>
            <person name="Hayles J."/>
            <person name="Baker S.G."/>
            <person name="Basham D."/>
            <person name="Bowman S."/>
            <person name="Brooks K."/>
            <person name="Brown D."/>
            <person name="Brown S."/>
            <person name="Chillingworth T."/>
            <person name="Churcher C.M."/>
            <person name="Collins M."/>
            <person name="Connor R."/>
            <person name="Cronin A."/>
            <person name="Davis P."/>
            <person name="Feltwell T."/>
            <person name="Fraser A."/>
            <person name="Gentles S."/>
            <person name="Goble A."/>
            <person name="Hamlin N."/>
            <person name="Harris D.E."/>
            <person name="Hidalgo J."/>
            <person name="Hodgson G."/>
            <person name="Holroyd S."/>
            <person name="Hornsby T."/>
            <person name="Howarth S."/>
            <person name="Huckle E.J."/>
            <person name="Hunt S."/>
            <person name="Jagels K."/>
            <person name="James K.D."/>
            <person name="Jones L."/>
            <person name="Jones M."/>
            <person name="Leather S."/>
            <person name="McDonald S."/>
            <person name="McLean J."/>
            <person name="Mooney P."/>
            <person name="Moule S."/>
            <person name="Mungall K.L."/>
            <person name="Murphy L.D."/>
            <person name="Niblett D."/>
            <person name="Odell C."/>
            <person name="Oliver K."/>
            <person name="O'Neil S."/>
            <person name="Pearson D."/>
            <person name="Quail M.A."/>
            <person name="Rabbinowitsch E."/>
            <person name="Rutherford K.M."/>
            <person name="Rutter S."/>
            <person name="Saunders D."/>
            <person name="Seeger K."/>
            <person name="Sharp S."/>
            <person name="Skelton J."/>
            <person name="Simmonds M.N."/>
            <person name="Squares R."/>
            <person name="Squares S."/>
            <person name="Stevens K."/>
            <person name="Taylor K."/>
            <person name="Taylor R.G."/>
            <person name="Tivey A."/>
            <person name="Walsh S.V."/>
            <person name="Warren T."/>
            <person name="Whitehead S."/>
            <person name="Woodward J.R."/>
            <person name="Volckaert G."/>
            <person name="Aert R."/>
            <person name="Robben J."/>
            <person name="Grymonprez B."/>
            <person name="Weltjens I."/>
            <person name="Vanstreels E."/>
            <person name="Rieger M."/>
            <person name="Schaefer M."/>
            <person name="Mueller-Auer S."/>
            <person name="Gabel C."/>
            <person name="Fuchs M."/>
            <person name="Duesterhoeft A."/>
            <person name="Fritzc C."/>
            <person name="Holzer E."/>
            <person name="Moestl D."/>
            <person name="Hilbert H."/>
            <person name="Borzym K."/>
            <person name="Langer I."/>
            <person name="Beck A."/>
            <person name="Lehrach H."/>
            <person name="Reinhardt R."/>
            <person name="Pohl T.M."/>
            <person name="Eger P."/>
            <person name="Zimmermann W."/>
            <person name="Wedler H."/>
            <person name="Wambutt R."/>
            <person name="Purnelle B."/>
            <person name="Goffeau A."/>
            <person name="Cadieu E."/>
            <person name="Dreano S."/>
            <person name="Gloux S."/>
            <person name="Lelaure V."/>
            <person name="Mottier S."/>
            <person name="Galibert F."/>
            <person name="Aves S.J."/>
            <person name="Xiang Z."/>
            <person name="Hunt C."/>
            <person name="Moore K."/>
            <person name="Hurst S.M."/>
            <person name="Lucas M."/>
            <person name="Rochet M."/>
            <person name="Gaillardin C."/>
            <person name="Tallada V.A."/>
            <person name="Garzon A."/>
            <person name="Thode G."/>
            <person name="Daga R.R."/>
            <person name="Cruzado L."/>
            <person name="Jimenez J."/>
            <person name="Sanchez M."/>
            <person name="del Rey F."/>
            <person name="Benito J."/>
            <person name="Dominguez A."/>
            <person name="Revuelta J.L."/>
            <person name="Moreno S."/>
            <person name="Armstrong J."/>
            <person name="Forsburg S.L."/>
            <person name="Cerutti L."/>
            <person name="Lowe T."/>
            <person name="McCombie W.R."/>
            <person name="Paulsen I."/>
            <person name="Potashkin J."/>
            <person name="Shpakovski G.V."/>
            <person name="Ussery D."/>
            <person name="Barrell B.G."/>
            <person name="Nurse P."/>
        </authorList>
    </citation>
    <scope>NUCLEOTIDE SEQUENCE [LARGE SCALE GENOMIC DNA]</scope>
    <source>
        <strain>972 / ATCC 24843</strain>
    </source>
</reference>
<name>COX8_SCHPO</name>
<evidence type="ECO:0000250" key="1">
    <source>
        <dbReference type="UniProtKB" id="P04039"/>
    </source>
</evidence>
<evidence type="ECO:0000255" key="2"/>
<evidence type="ECO:0000305" key="3"/>
<evidence type="ECO:0007829" key="4">
    <source>
        <dbReference type="PDB" id="8C8Q"/>
    </source>
</evidence>
<comment type="function">
    <text evidence="1">Component of the cytochrome c oxidase, the last enzyme in the mitochondrial electron transport chain which drives oxidative phosphorylation. The respiratory chain contains 3 multisubunit complexes succinate dehydrogenase (complex II, CII), ubiquinol-cytochrome c oxidoreductase (cytochrome b-c1 complex, complex III, CIII) and cytochrome c oxidase (complex IV, CIV), that cooperate to transfer electrons derived from NADH and succinate to molecular oxygen, creating an electrochemical gradient over the inner membrane that drives transmembrane transport and the ATP synthase. Cytochrome c oxidase is the component of the respiratory chain that catalyzes the reduction of oxygen to water. Electrons originating from reduced cytochrome c in the intermembrane space (IMS) are transferred via the dinuclear copper A center (CU(A)) of subunit 2 and heme A of subunit 1 to the active site in subunit 1, a binuclear center (BNC) formed by heme A3 and copper B (CU(B)). The BNC reduces molecular oxygen to 2 water molecules using 4 electrons from cytochrome c in the IMS and 4 protons from the mitochondrial matrix.</text>
</comment>
<comment type="pathway">
    <text evidence="1">Energy metabolism; oxidative phosphorylation.</text>
</comment>
<comment type="subunit">
    <text evidence="1">Component of the cytochrome c oxidase (complex IV, CIV), a multisubunit enzyme composed of a catalytic core of 3 subunits and several supernumerary subunits. The complex exists as a monomer or a dimer and forms supercomplexes (SCs) in the inner mitochondrial membrane with ubiquinol-cytochrome c oxidoreductase (cytochrome b-c1 complex, complex III, CIII).</text>
</comment>
<comment type="subcellular location">
    <subcellularLocation>
        <location evidence="1">Mitochondrion inner membrane</location>
        <topology evidence="1">Single-pass membrane protein</topology>
    </subcellularLocation>
</comment>
<comment type="similarity">
    <text evidence="3">Belongs to the cytochrome c oxidase VIIc family.</text>
</comment>
<feature type="transit peptide" description="Mitochondrion" evidence="2">
    <location>
        <begin position="1"/>
        <end position="17"/>
    </location>
</feature>
<feature type="chain" id="PRO_0000006172" description="Cytochrome c oxidase polypeptide VIII, mitochondrial">
    <location>
        <begin position="18"/>
        <end position="66"/>
    </location>
</feature>
<feature type="topological domain" description="Mitochondrial matrix" evidence="1">
    <location>
        <begin position="18"/>
        <end position="38"/>
    </location>
</feature>
<feature type="transmembrane region" description="Helical" evidence="2">
    <location>
        <begin position="39"/>
        <end position="59"/>
    </location>
</feature>
<feature type="topological domain" description="Mitochondrial intermembrane" evidence="1">
    <location>
        <begin position="60"/>
        <end position="66"/>
    </location>
</feature>
<feature type="strand" evidence="4">
    <location>
        <begin position="31"/>
        <end position="33"/>
    </location>
</feature>
<feature type="helix" evidence="4">
    <location>
        <begin position="40"/>
        <end position="61"/>
    </location>
</feature>
<protein>
    <recommendedName>
        <fullName>Cytochrome c oxidase polypeptide VIII, mitochondrial</fullName>
    </recommendedName>
</protein>
<dbReference type="EMBL" id="CU329670">
    <property type="protein sequence ID" value="CAB71272.1"/>
    <property type="molecule type" value="Genomic_DNA"/>
</dbReference>
<dbReference type="RefSeq" id="NP_594028.1">
    <property type="nucleotide sequence ID" value="NM_001019453.2"/>
</dbReference>
<dbReference type="PDB" id="8C8Q">
    <property type="method" value="EM"/>
    <property type="resolution" value="3.36 A"/>
    <property type="chains" value="H=1-66"/>
</dbReference>
<dbReference type="PDB" id="8Q1B">
    <property type="method" value="EM"/>
    <property type="resolution" value="3.40 A"/>
    <property type="chains" value="h=1-66"/>
</dbReference>
<dbReference type="PDBsum" id="8C8Q"/>
<dbReference type="PDBsum" id="8Q1B"/>
<dbReference type="EMDB" id="EMD-16491"/>
<dbReference type="EMDB" id="EMD-18062"/>
<dbReference type="SMR" id="Q9P4W1"/>
<dbReference type="BioGRID" id="279098">
    <property type="interactions" value="6"/>
</dbReference>
<dbReference type="ComplexPortal" id="CPX-9641">
    <property type="entry name" value="Mitochondrial respiratory chain complex IV"/>
</dbReference>
<dbReference type="FunCoup" id="Q9P4W1">
    <property type="interactions" value="67"/>
</dbReference>
<dbReference type="STRING" id="284812.Q9P4W1"/>
<dbReference type="PaxDb" id="4896-SPAC24C9.16c.1"/>
<dbReference type="EnsemblFungi" id="SPAC24C9.16c.1">
    <property type="protein sequence ID" value="SPAC24C9.16c.1:pep"/>
    <property type="gene ID" value="SPAC24C9.16c"/>
</dbReference>
<dbReference type="GeneID" id="2542644"/>
<dbReference type="KEGG" id="spo:2542644"/>
<dbReference type="PomBase" id="SPAC24C9.16c">
    <property type="gene designation" value="cox8"/>
</dbReference>
<dbReference type="VEuPathDB" id="FungiDB:SPAC24C9.16c"/>
<dbReference type="HOGENOM" id="CLU_2832627_0_0_1"/>
<dbReference type="InParanoid" id="Q9P4W1"/>
<dbReference type="OMA" id="TMLFIGS"/>
<dbReference type="UniPathway" id="UPA00705"/>
<dbReference type="PRO" id="PR:Q9P4W1"/>
<dbReference type="Proteomes" id="UP000002485">
    <property type="component" value="Chromosome I"/>
</dbReference>
<dbReference type="GO" id="GO:0005743">
    <property type="term" value="C:mitochondrial inner membrane"/>
    <property type="evidence" value="ECO:0000305"/>
    <property type="project" value="PomBase"/>
</dbReference>
<dbReference type="GO" id="GO:0005739">
    <property type="term" value="C:mitochondrion"/>
    <property type="evidence" value="ECO:0007005"/>
    <property type="project" value="PomBase"/>
</dbReference>
<dbReference type="GO" id="GO:0045277">
    <property type="term" value="C:respiratory chain complex IV"/>
    <property type="evidence" value="ECO:0000314"/>
    <property type="project" value="PomBase"/>
</dbReference>
<dbReference type="GO" id="GO:0016491">
    <property type="term" value="F:oxidoreductase activity"/>
    <property type="evidence" value="ECO:0007669"/>
    <property type="project" value="UniProtKB-KW"/>
</dbReference>
<dbReference type="GO" id="GO:0006123">
    <property type="term" value="P:mitochondrial electron transport, cytochrome c to oxygen"/>
    <property type="evidence" value="ECO:0000318"/>
    <property type="project" value="GO_Central"/>
</dbReference>
<dbReference type="GO" id="GO:1902600">
    <property type="term" value="P:proton transmembrane transport"/>
    <property type="evidence" value="ECO:0007669"/>
    <property type="project" value="GOC"/>
</dbReference>
<dbReference type="CDD" id="cd00929">
    <property type="entry name" value="Cyt_c_Oxidase_VIIc"/>
    <property type="match status" value="1"/>
</dbReference>
<dbReference type="Gene3D" id="4.10.49.10">
    <property type="entry name" value="Cytochrome c oxidase subunit VIIc"/>
    <property type="match status" value="1"/>
</dbReference>
<dbReference type="InterPro" id="IPR004202">
    <property type="entry name" value="COX7C/Cox8"/>
</dbReference>
<dbReference type="InterPro" id="IPR036636">
    <property type="entry name" value="COX7C/Cox8_sf"/>
</dbReference>
<dbReference type="Pfam" id="PF02935">
    <property type="entry name" value="COX7C"/>
    <property type="match status" value="1"/>
</dbReference>
<dbReference type="SUPFAM" id="SSF81427">
    <property type="entry name" value="Mitochondrial cytochrome c oxidase subunit VIIc (aka VIIIa)"/>
    <property type="match status" value="1"/>
</dbReference>
<gene>
    <name type="primary">cox8</name>
    <name type="ORF">SPAC24C9.16c</name>
</gene>
<accession>Q9P4W1</accession>
<keyword id="KW-0002">3D-structure</keyword>
<keyword id="KW-0472">Membrane</keyword>
<keyword id="KW-0496">Mitochondrion</keyword>
<keyword id="KW-0999">Mitochondrion inner membrane</keyword>
<keyword id="KW-0560">Oxidoreductase</keyword>
<keyword id="KW-1185">Reference proteome</keyword>
<keyword id="KW-0809">Transit peptide</keyword>
<keyword id="KW-0812">Transmembrane</keyword>
<keyword id="KW-1133">Transmembrane helix</keyword>